<protein>
    <recommendedName>
        <fullName evidence="1">RNA-binding protein Hfq</fullName>
    </recommendedName>
</protein>
<keyword id="KW-1185">Reference proteome</keyword>
<keyword id="KW-0694">RNA-binding</keyword>
<keyword id="KW-0346">Stress response</keyword>
<comment type="function">
    <text evidence="1">RNA chaperone that binds small regulatory RNA (sRNAs) and mRNAs to facilitate mRNA translational regulation in response to envelope stress, environmental stress and changes in metabolite concentrations. Also binds with high specificity to tRNAs.</text>
</comment>
<comment type="subunit">
    <text evidence="1">Homohexamer.</text>
</comment>
<comment type="similarity">
    <text evidence="1">Belongs to the Hfq family.</text>
</comment>
<organism>
    <name type="scientific">Delftia acidovorans (strain DSM 14801 / SPH-1)</name>
    <dbReference type="NCBI Taxonomy" id="398578"/>
    <lineage>
        <taxon>Bacteria</taxon>
        <taxon>Pseudomonadati</taxon>
        <taxon>Pseudomonadota</taxon>
        <taxon>Betaproteobacteria</taxon>
        <taxon>Burkholderiales</taxon>
        <taxon>Comamonadaceae</taxon>
        <taxon>Delftia</taxon>
    </lineage>
</organism>
<reference key="1">
    <citation type="submission" date="2007-11" db="EMBL/GenBank/DDBJ databases">
        <title>Complete sequence of Delftia acidovorans DSM 14801 / SPH-1.</title>
        <authorList>
            <person name="Copeland A."/>
            <person name="Lucas S."/>
            <person name="Lapidus A."/>
            <person name="Barry K."/>
            <person name="Glavina del Rio T."/>
            <person name="Dalin E."/>
            <person name="Tice H."/>
            <person name="Pitluck S."/>
            <person name="Lowry S."/>
            <person name="Clum A."/>
            <person name="Schmutz J."/>
            <person name="Larimer F."/>
            <person name="Land M."/>
            <person name="Hauser L."/>
            <person name="Kyrpides N."/>
            <person name="Kim E."/>
            <person name="Schleheck D."/>
            <person name="Richardson P."/>
        </authorList>
    </citation>
    <scope>NUCLEOTIDE SEQUENCE [LARGE SCALE GENOMIC DNA]</scope>
    <source>
        <strain>DSM 14801 / SPH-1</strain>
    </source>
</reference>
<accession>A9BMU8</accession>
<name>HFQ_DELAS</name>
<evidence type="ECO:0000255" key="1">
    <source>
        <dbReference type="HAMAP-Rule" id="MF_00436"/>
    </source>
</evidence>
<evidence type="ECO:0000255" key="2">
    <source>
        <dbReference type="PROSITE-ProRule" id="PRU01346"/>
    </source>
</evidence>
<feature type="chain" id="PRO_1000190320" description="RNA-binding protein Hfq">
    <location>
        <begin position="1"/>
        <end position="83"/>
    </location>
</feature>
<feature type="domain" description="Sm" evidence="2">
    <location>
        <begin position="10"/>
        <end position="69"/>
    </location>
</feature>
<dbReference type="EMBL" id="CP000884">
    <property type="protein sequence ID" value="ABX37643.1"/>
    <property type="molecule type" value="Genomic_DNA"/>
</dbReference>
<dbReference type="RefSeq" id="WP_012206813.1">
    <property type="nucleotide sequence ID" value="NC_010002.1"/>
</dbReference>
<dbReference type="SMR" id="A9BMU8"/>
<dbReference type="STRING" id="398578.Daci_5014"/>
<dbReference type="GeneID" id="94690997"/>
<dbReference type="KEGG" id="dac:Daci_5014"/>
<dbReference type="eggNOG" id="COG1923">
    <property type="taxonomic scope" value="Bacteria"/>
</dbReference>
<dbReference type="HOGENOM" id="CLU_113688_2_2_4"/>
<dbReference type="Proteomes" id="UP000000784">
    <property type="component" value="Chromosome"/>
</dbReference>
<dbReference type="GO" id="GO:0005829">
    <property type="term" value="C:cytosol"/>
    <property type="evidence" value="ECO:0007669"/>
    <property type="project" value="TreeGrafter"/>
</dbReference>
<dbReference type="GO" id="GO:0003723">
    <property type="term" value="F:RNA binding"/>
    <property type="evidence" value="ECO:0007669"/>
    <property type="project" value="UniProtKB-UniRule"/>
</dbReference>
<dbReference type="GO" id="GO:0006355">
    <property type="term" value="P:regulation of DNA-templated transcription"/>
    <property type="evidence" value="ECO:0007669"/>
    <property type="project" value="InterPro"/>
</dbReference>
<dbReference type="GO" id="GO:0043487">
    <property type="term" value="P:regulation of RNA stability"/>
    <property type="evidence" value="ECO:0007669"/>
    <property type="project" value="TreeGrafter"/>
</dbReference>
<dbReference type="GO" id="GO:0045974">
    <property type="term" value="P:regulation of translation, ncRNA-mediated"/>
    <property type="evidence" value="ECO:0007669"/>
    <property type="project" value="TreeGrafter"/>
</dbReference>
<dbReference type="CDD" id="cd01716">
    <property type="entry name" value="Hfq"/>
    <property type="match status" value="1"/>
</dbReference>
<dbReference type="FunFam" id="2.30.30.100:FF:000001">
    <property type="entry name" value="RNA-binding protein Hfq"/>
    <property type="match status" value="1"/>
</dbReference>
<dbReference type="Gene3D" id="2.30.30.100">
    <property type="match status" value="1"/>
</dbReference>
<dbReference type="HAMAP" id="MF_00436">
    <property type="entry name" value="Hfq"/>
    <property type="match status" value="1"/>
</dbReference>
<dbReference type="InterPro" id="IPR005001">
    <property type="entry name" value="Hfq"/>
</dbReference>
<dbReference type="InterPro" id="IPR010920">
    <property type="entry name" value="LSM_dom_sf"/>
</dbReference>
<dbReference type="InterPro" id="IPR047575">
    <property type="entry name" value="Sm"/>
</dbReference>
<dbReference type="NCBIfam" id="TIGR02383">
    <property type="entry name" value="Hfq"/>
    <property type="match status" value="1"/>
</dbReference>
<dbReference type="NCBIfam" id="NF001602">
    <property type="entry name" value="PRK00395.1"/>
    <property type="match status" value="1"/>
</dbReference>
<dbReference type="PANTHER" id="PTHR34772">
    <property type="entry name" value="RNA-BINDING PROTEIN HFQ"/>
    <property type="match status" value="1"/>
</dbReference>
<dbReference type="PANTHER" id="PTHR34772:SF1">
    <property type="entry name" value="RNA-BINDING PROTEIN HFQ"/>
    <property type="match status" value="1"/>
</dbReference>
<dbReference type="Pfam" id="PF17209">
    <property type="entry name" value="Hfq"/>
    <property type="match status" value="1"/>
</dbReference>
<dbReference type="SUPFAM" id="SSF50182">
    <property type="entry name" value="Sm-like ribonucleoproteins"/>
    <property type="match status" value="1"/>
</dbReference>
<dbReference type="PROSITE" id="PS52002">
    <property type="entry name" value="SM"/>
    <property type="match status" value="1"/>
</dbReference>
<proteinExistence type="inferred from homology"/>
<gene>
    <name evidence="1" type="primary">hfq</name>
    <name type="ordered locus">Daci_5014</name>
</gene>
<sequence>MSNKGQLLQDPFLNALRREHVPVSIYLVNGIKLQGQIESFDQYVVLLRNTVTQMVYKHAISTIVPGRAVNFSTAEAAGSDASA</sequence>